<evidence type="ECO:0000250" key="1"/>
<evidence type="ECO:0000305" key="2"/>
<keyword id="KW-0067">ATP-binding</keyword>
<keyword id="KW-0903">Direct protein sequencing</keyword>
<keyword id="KW-0324">Glycolysis</keyword>
<keyword id="KW-0418">Kinase</keyword>
<keyword id="KW-0460">Magnesium</keyword>
<keyword id="KW-0547">Nucleotide-binding</keyword>
<keyword id="KW-0670">Pyruvate</keyword>
<keyword id="KW-0808">Transferase</keyword>
<comment type="catalytic activity">
    <reaction>
        <text>pyruvate + ATP = phosphoenolpyruvate + ADP + H(+)</text>
        <dbReference type="Rhea" id="RHEA:18157"/>
        <dbReference type="ChEBI" id="CHEBI:15361"/>
        <dbReference type="ChEBI" id="CHEBI:15378"/>
        <dbReference type="ChEBI" id="CHEBI:30616"/>
        <dbReference type="ChEBI" id="CHEBI:58702"/>
        <dbReference type="ChEBI" id="CHEBI:456216"/>
        <dbReference type="EC" id="2.7.1.40"/>
    </reaction>
</comment>
<comment type="cofactor">
    <cofactor evidence="1">
        <name>Mg(2+)</name>
        <dbReference type="ChEBI" id="CHEBI:18420"/>
    </cofactor>
</comment>
<comment type="cofactor">
    <cofactor evidence="1">
        <name>K(+)</name>
        <dbReference type="ChEBI" id="CHEBI:29103"/>
    </cofactor>
</comment>
<comment type="pathway">
    <text>Carbohydrate degradation; glycolysis; pyruvate from D-glyceraldehyde 3-phosphate: step 5/5.</text>
</comment>
<comment type="subunit">
    <text evidence="1">Homotetramer.</text>
</comment>
<comment type="similarity">
    <text evidence="2">Belongs to the pyruvate kinase family.</text>
</comment>
<name>KPYK_CLOPA</name>
<dbReference type="EC" id="2.7.1.40"/>
<dbReference type="UniPathway" id="UPA00109">
    <property type="reaction ID" value="UER00188"/>
</dbReference>
<dbReference type="GO" id="GO:0005524">
    <property type="term" value="F:ATP binding"/>
    <property type="evidence" value="ECO:0007669"/>
    <property type="project" value="UniProtKB-KW"/>
</dbReference>
<dbReference type="GO" id="GO:0016301">
    <property type="term" value="F:kinase activity"/>
    <property type="evidence" value="ECO:0007669"/>
    <property type="project" value="UniProtKB-KW"/>
</dbReference>
<dbReference type="GO" id="GO:0004743">
    <property type="term" value="F:pyruvate kinase activity"/>
    <property type="evidence" value="ECO:0007669"/>
    <property type="project" value="UniProtKB-EC"/>
</dbReference>
<accession>P81344</accession>
<organism>
    <name type="scientific">Clostridium pasteurianum</name>
    <dbReference type="NCBI Taxonomy" id="1501"/>
    <lineage>
        <taxon>Bacteria</taxon>
        <taxon>Bacillati</taxon>
        <taxon>Bacillota</taxon>
        <taxon>Clostridia</taxon>
        <taxon>Eubacteriales</taxon>
        <taxon>Clostridiaceae</taxon>
        <taxon>Clostridium</taxon>
    </lineage>
</organism>
<feature type="chain" id="PRO_0000112065" description="Pyruvate kinase">
    <location>
        <begin position="1"/>
        <end position="24" status="greater than"/>
    </location>
</feature>
<feature type="non-terminal residue">
    <location>
        <position position="24"/>
    </location>
</feature>
<proteinExistence type="evidence at protein level"/>
<reference key="1">
    <citation type="journal article" date="1998" name="Electrophoresis">
        <title>Two-dimensional gel electrophoresis separation and N-terminal sequence analysis of proteins from Clostridium pasteurianum W5.</title>
        <authorList>
            <person name="Flengsrud R."/>
            <person name="Skjeldal L."/>
        </authorList>
    </citation>
    <scope>PROTEIN SEQUENCE</scope>
    <source>
        <strain>ATCC 6013 / DSM 525 / NCIB 9486 / VKM B-1774 / W5</strain>
    </source>
</reference>
<gene>
    <name type="primary">pyk</name>
</gene>
<sequence length="24" mass="2739">MQKTKMIFTIGPASXTEEMLVXFI</sequence>
<protein>
    <recommendedName>
        <fullName>Pyruvate kinase</fullName>
        <shortName>PK</shortName>
        <ecNumber>2.7.1.40</ecNumber>
    </recommendedName>
    <alternativeName>
        <fullName>CP 8</fullName>
    </alternativeName>
</protein>